<keyword id="KW-0067">ATP-binding</keyword>
<keyword id="KW-1003">Cell membrane</keyword>
<keyword id="KW-0472">Membrane</keyword>
<keyword id="KW-0547">Nucleotide-binding</keyword>
<keyword id="KW-1278">Translocase</keyword>
<keyword id="KW-0813">Transport</keyword>
<organism>
    <name type="scientific">Mesomycoplasma hyopneumoniae (strain J / ATCC 25934 / NCTC 10110)</name>
    <name type="common">Mycoplasma hyopneumoniae</name>
    <dbReference type="NCBI Taxonomy" id="262719"/>
    <lineage>
        <taxon>Bacteria</taxon>
        <taxon>Bacillati</taxon>
        <taxon>Mycoplasmatota</taxon>
        <taxon>Mycoplasmoidales</taxon>
        <taxon>Metamycoplasmataceae</taxon>
        <taxon>Mesomycoplasma</taxon>
    </lineage>
</organism>
<accession>Q4A9E1</accession>
<evidence type="ECO:0000255" key="1">
    <source>
        <dbReference type="HAMAP-Rule" id="MF_01726"/>
    </source>
</evidence>
<sequence length="444" mass="51661">MKNIEKSEIIISLVDVDKEFGDKKVLDQINLDIKRGDFVTLLGPSGSGKTTILRLIGGFEWTTRGEIKFNGIDIKDVPAHKRDTATIFQDYALFPHLSVRGNIEFGLKLKRIKKKAEEIPDVVWKKFEHLKKKWQDKQKRKIKELKILQAHLEKLLENPQLDIKKRKKLQDKLDDSDFRYSNWENYLTSKSESFKKKYLTRKITKQEINKEITDIIDLVGLTGNENRAISELSGGMKQRVALARSLVIEPEIVLLDEPLSALDTKIRQKMQVFLKKIQQKLGLTFIFVTHDQDEALQLSDKIAIIRNGKIAQYDEPKQIYDYPVNKWVANFIGDSNFFQAKYIKKNQVEILGLKLYTIHDEFIPGQKLDCLIRPEDIDIDLNSGYFKGKVIQNIYKGSYYSLDIKVENTIINVETNDFYDLETQVFLKWDDDAIHLMEMENAEI</sequence>
<feature type="chain" id="PRO_0000286258" description="Spermidine/putrescine import ATP-binding protein PotA">
    <location>
        <begin position="1"/>
        <end position="444"/>
    </location>
</feature>
<feature type="domain" description="ABC transporter" evidence="1">
    <location>
        <begin position="11"/>
        <end position="332"/>
    </location>
</feature>
<feature type="region of interest" description="Insert">
    <location>
        <begin position="111"/>
        <end position="201"/>
    </location>
</feature>
<feature type="binding site" evidence="1">
    <location>
        <begin position="43"/>
        <end position="50"/>
    </location>
    <ligand>
        <name>ATP</name>
        <dbReference type="ChEBI" id="CHEBI:30616"/>
    </ligand>
</feature>
<gene>
    <name evidence="1" type="primary">potA</name>
    <name type="ordered locus">MHJ_0544</name>
</gene>
<reference key="1">
    <citation type="journal article" date="2005" name="J. Bacteriol.">
        <title>Swine and poultry pathogens: the complete genome sequences of two strains of Mycoplasma hyopneumoniae and a strain of Mycoplasma synoviae.</title>
        <authorList>
            <person name="Vasconcelos A.T.R."/>
            <person name="Ferreira H.B."/>
            <person name="Bizarro C.V."/>
            <person name="Bonatto S.L."/>
            <person name="Carvalho M.O."/>
            <person name="Pinto P.M."/>
            <person name="Almeida D.F."/>
            <person name="Almeida L.G.P."/>
            <person name="Almeida R."/>
            <person name="Alves-Junior L."/>
            <person name="Assuncao E.N."/>
            <person name="Azevedo V.A.C."/>
            <person name="Bogo M.R."/>
            <person name="Brigido M.M."/>
            <person name="Brocchi M."/>
            <person name="Burity H.A."/>
            <person name="Camargo A.A."/>
            <person name="Camargo S.S."/>
            <person name="Carepo M.S."/>
            <person name="Carraro D.M."/>
            <person name="de Mattos Cascardo J.C."/>
            <person name="Castro L.A."/>
            <person name="Cavalcanti G."/>
            <person name="Chemale G."/>
            <person name="Collevatti R.G."/>
            <person name="Cunha C.W."/>
            <person name="Dallagiovanna B."/>
            <person name="Dambros B.P."/>
            <person name="Dellagostin O.A."/>
            <person name="Falcao C."/>
            <person name="Fantinatti-Garboggini F."/>
            <person name="Felipe M.S.S."/>
            <person name="Fiorentin L."/>
            <person name="Franco G.R."/>
            <person name="Freitas N.S.A."/>
            <person name="Frias D."/>
            <person name="Grangeiro T.B."/>
            <person name="Grisard E.C."/>
            <person name="Guimaraes C.T."/>
            <person name="Hungria M."/>
            <person name="Jardim S.N."/>
            <person name="Krieger M.A."/>
            <person name="Laurino J.P."/>
            <person name="Lima L.F.A."/>
            <person name="Lopes M.I."/>
            <person name="Loreto E.L.S."/>
            <person name="Madeira H.M.F."/>
            <person name="Manfio G.P."/>
            <person name="Maranhao A.Q."/>
            <person name="Martinkovics C.T."/>
            <person name="Medeiros S.R.B."/>
            <person name="Moreira M.A.M."/>
            <person name="Neiva M."/>
            <person name="Ramalho-Neto C.E."/>
            <person name="Nicolas M.F."/>
            <person name="Oliveira S.C."/>
            <person name="Paixao R.F.C."/>
            <person name="Pedrosa F.O."/>
            <person name="Pena S.D.J."/>
            <person name="Pereira M."/>
            <person name="Pereira-Ferrari L."/>
            <person name="Piffer I."/>
            <person name="Pinto L.S."/>
            <person name="Potrich D.P."/>
            <person name="Salim A.C.M."/>
            <person name="Santos F.R."/>
            <person name="Schmitt R."/>
            <person name="Schneider M.P.C."/>
            <person name="Schrank A."/>
            <person name="Schrank I.S."/>
            <person name="Schuck A.F."/>
            <person name="Seuanez H.N."/>
            <person name="Silva D.W."/>
            <person name="Silva R."/>
            <person name="Silva S.C."/>
            <person name="Soares C.M.A."/>
            <person name="Souza K.R.L."/>
            <person name="Souza R.C."/>
            <person name="Staats C.C."/>
            <person name="Steffens M.B.R."/>
            <person name="Teixeira S.M.R."/>
            <person name="Urmenyi T.P."/>
            <person name="Vainstein M.H."/>
            <person name="Zuccherato L.W."/>
            <person name="Simpson A.J.G."/>
            <person name="Zaha A."/>
        </authorList>
    </citation>
    <scope>NUCLEOTIDE SEQUENCE [LARGE SCALE GENOMIC DNA]</scope>
    <source>
        <strain>J / ATCC 25934 / NCTC 10110</strain>
    </source>
</reference>
<comment type="function">
    <text evidence="1">Part of the ABC transporter complex PotABCD involved in spermidine/putrescine import. Responsible for energy coupling to the transport system.</text>
</comment>
<comment type="catalytic activity">
    <reaction evidence="1">
        <text>ATP + H2O + polyamine-[polyamine-binding protein]Side 1 = ADP + phosphate + polyamineSide 2 + [polyamine-binding protein]Side 1.</text>
        <dbReference type="EC" id="7.6.2.11"/>
    </reaction>
</comment>
<comment type="subunit">
    <text evidence="1">The complex is composed of two ATP-binding proteins (PotA), two transmembrane proteins (PotB and PotC) and a solute-binding protein (PotD).</text>
</comment>
<comment type="subcellular location">
    <subcellularLocation>
        <location evidence="1">Cell membrane</location>
        <topology evidence="1">Peripheral membrane protein</topology>
    </subcellularLocation>
</comment>
<comment type="similarity">
    <text evidence="1">Belongs to the ABC transporter superfamily. Spermidine/putrescine importer (TC 3.A.1.11.1) family.</text>
</comment>
<dbReference type="EC" id="7.6.2.11" evidence="1"/>
<dbReference type="EMBL" id="AE017243">
    <property type="protein sequence ID" value="AAZ44630.1"/>
    <property type="molecule type" value="Genomic_DNA"/>
</dbReference>
<dbReference type="RefSeq" id="WP_011284286.1">
    <property type="nucleotide sequence ID" value="NC_007295.1"/>
</dbReference>
<dbReference type="SMR" id="Q4A9E1"/>
<dbReference type="GeneID" id="41334843"/>
<dbReference type="KEGG" id="mhj:MHJ_0544"/>
<dbReference type="eggNOG" id="COG3839">
    <property type="taxonomic scope" value="Bacteria"/>
</dbReference>
<dbReference type="HOGENOM" id="CLU_000604_1_1_14"/>
<dbReference type="OrthoDB" id="9802264at2"/>
<dbReference type="Proteomes" id="UP000000548">
    <property type="component" value="Chromosome"/>
</dbReference>
<dbReference type="GO" id="GO:0043190">
    <property type="term" value="C:ATP-binding cassette (ABC) transporter complex"/>
    <property type="evidence" value="ECO:0007669"/>
    <property type="project" value="InterPro"/>
</dbReference>
<dbReference type="GO" id="GO:0015417">
    <property type="term" value="F:ABC-type polyamine transporter activity"/>
    <property type="evidence" value="ECO:0007669"/>
    <property type="project" value="UniProtKB-EC"/>
</dbReference>
<dbReference type="GO" id="GO:0005524">
    <property type="term" value="F:ATP binding"/>
    <property type="evidence" value="ECO:0007669"/>
    <property type="project" value="UniProtKB-KW"/>
</dbReference>
<dbReference type="GO" id="GO:0016887">
    <property type="term" value="F:ATP hydrolysis activity"/>
    <property type="evidence" value="ECO:0007669"/>
    <property type="project" value="InterPro"/>
</dbReference>
<dbReference type="Gene3D" id="2.40.50.100">
    <property type="match status" value="1"/>
</dbReference>
<dbReference type="Gene3D" id="3.40.50.300">
    <property type="entry name" value="P-loop containing nucleotide triphosphate hydrolases"/>
    <property type="match status" value="2"/>
</dbReference>
<dbReference type="InterPro" id="IPR003593">
    <property type="entry name" value="AAA+_ATPase"/>
</dbReference>
<dbReference type="InterPro" id="IPR050093">
    <property type="entry name" value="ABC_SmlMolc_Importer"/>
</dbReference>
<dbReference type="InterPro" id="IPR003439">
    <property type="entry name" value="ABC_transporter-like_ATP-bd"/>
</dbReference>
<dbReference type="InterPro" id="IPR017871">
    <property type="entry name" value="ABC_transporter-like_CS"/>
</dbReference>
<dbReference type="InterPro" id="IPR008995">
    <property type="entry name" value="Mo/tungstate-bd_C_term_dom"/>
</dbReference>
<dbReference type="InterPro" id="IPR027417">
    <property type="entry name" value="P-loop_NTPase"/>
</dbReference>
<dbReference type="InterPro" id="IPR013611">
    <property type="entry name" value="Transp-assoc_OB_typ2"/>
</dbReference>
<dbReference type="PANTHER" id="PTHR42781">
    <property type="entry name" value="SPERMIDINE/PUTRESCINE IMPORT ATP-BINDING PROTEIN POTA"/>
    <property type="match status" value="1"/>
</dbReference>
<dbReference type="PANTHER" id="PTHR42781:SF4">
    <property type="entry name" value="SPERMIDINE_PUTRESCINE IMPORT ATP-BINDING PROTEIN POTA"/>
    <property type="match status" value="1"/>
</dbReference>
<dbReference type="Pfam" id="PF00005">
    <property type="entry name" value="ABC_tran"/>
    <property type="match status" value="1"/>
</dbReference>
<dbReference type="Pfam" id="PF08402">
    <property type="entry name" value="TOBE_2"/>
    <property type="match status" value="1"/>
</dbReference>
<dbReference type="SMART" id="SM00382">
    <property type="entry name" value="AAA"/>
    <property type="match status" value="1"/>
</dbReference>
<dbReference type="SUPFAM" id="SSF50331">
    <property type="entry name" value="MOP-like"/>
    <property type="match status" value="1"/>
</dbReference>
<dbReference type="SUPFAM" id="SSF52540">
    <property type="entry name" value="P-loop containing nucleoside triphosphate hydrolases"/>
    <property type="match status" value="1"/>
</dbReference>
<dbReference type="PROSITE" id="PS00211">
    <property type="entry name" value="ABC_TRANSPORTER_1"/>
    <property type="match status" value="1"/>
</dbReference>
<dbReference type="PROSITE" id="PS50893">
    <property type="entry name" value="ABC_TRANSPORTER_2"/>
    <property type="match status" value="1"/>
</dbReference>
<dbReference type="PROSITE" id="PS51305">
    <property type="entry name" value="POTA"/>
    <property type="match status" value="1"/>
</dbReference>
<name>POTA_MESHJ</name>
<protein>
    <recommendedName>
        <fullName evidence="1">Spermidine/putrescine import ATP-binding protein PotA</fullName>
        <ecNumber evidence="1">7.6.2.11</ecNumber>
    </recommendedName>
</protein>
<proteinExistence type="inferred from homology"/>